<accession>Q9NUJ7</accession>
<accession>A2BH51</accession>
<accession>A2BH52</accession>
<reference key="1">
    <citation type="journal article" date="2004" name="Nat. Genet.">
        <title>Complete sequencing and characterization of 21,243 full-length human cDNAs.</title>
        <authorList>
            <person name="Ota T."/>
            <person name="Suzuki Y."/>
            <person name="Nishikawa T."/>
            <person name="Otsuki T."/>
            <person name="Sugiyama T."/>
            <person name="Irie R."/>
            <person name="Wakamatsu A."/>
            <person name="Hayashi K."/>
            <person name="Sato H."/>
            <person name="Nagai K."/>
            <person name="Kimura K."/>
            <person name="Makita H."/>
            <person name="Sekine M."/>
            <person name="Obayashi M."/>
            <person name="Nishi T."/>
            <person name="Shibahara T."/>
            <person name="Tanaka T."/>
            <person name="Ishii S."/>
            <person name="Yamamoto J."/>
            <person name="Saito K."/>
            <person name="Kawai Y."/>
            <person name="Isono Y."/>
            <person name="Nakamura Y."/>
            <person name="Nagahari K."/>
            <person name="Murakami K."/>
            <person name="Yasuda T."/>
            <person name="Iwayanagi T."/>
            <person name="Wagatsuma M."/>
            <person name="Shiratori A."/>
            <person name="Sudo H."/>
            <person name="Hosoiri T."/>
            <person name="Kaku Y."/>
            <person name="Kodaira H."/>
            <person name="Kondo H."/>
            <person name="Sugawara M."/>
            <person name="Takahashi M."/>
            <person name="Kanda K."/>
            <person name="Yokoi T."/>
            <person name="Furuya T."/>
            <person name="Kikkawa E."/>
            <person name="Omura Y."/>
            <person name="Abe K."/>
            <person name="Kamihara K."/>
            <person name="Katsuta N."/>
            <person name="Sato K."/>
            <person name="Tanikawa M."/>
            <person name="Yamazaki M."/>
            <person name="Ninomiya K."/>
            <person name="Ishibashi T."/>
            <person name="Yamashita H."/>
            <person name="Murakawa K."/>
            <person name="Fujimori K."/>
            <person name="Tanai H."/>
            <person name="Kimata M."/>
            <person name="Watanabe M."/>
            <person name="Hiraoka S."/>
            <person name="Chiba Y."/>
            <person name="Ishida S."/>
            <person name="Ono Y."/>
            <person name="Takiguchi S."/>
            <person name="Watanabe S."/>
            <person name="Yosida M."/>
            <person name="Hotuta T."/>
            <person name="Kusano J."/>
            <person name="Kanehori K."/>
            <person name="Takahashi-Fujii A."/>
            <person name="Hara H."/>
            <person name="Tanase T.-O."/>
            <person name="Nomura Y."/>
            <person name="Togiya S."/>
            <person name="Komai F."/>
            <person name="Hara R."/>
            <person name="Takeuchi K."/>
            <person name="Arita M."/>
            <person name="Imose N."/>
            <person name="Musashino K."/>
            <person name="Yuuki H."/>
            <person name="Oshima A."/>
            <person name="Sasaki N."/>
            <person name="Aotsuka S."/>
            <person name="Yoshikawa Y."/>
            <person name="Matsunawa H."/>
            <person name="Ichihara T."/>
            <person name="Shiohata N."/>
            <person name="Sano S."/>
            <person name="Moriya S."/>
            <person name="Momiyama H."/>
            <person name="Satoh N."/>
            <person name="Takami S."/>
            <person name="Terashima Y."/>
            <person name="Suzuki O."/>
            <person name="Nakagawa S."/>
            <person name="Senoh A."/>
            <person name="Mizoguchi H."/>
            <person name="Goto Y."/>
            <person name="Shimizu F."/>
            <person name="Wakebe H."/>
            <person name="Hishigaki H."/>
            <person name="Watanabe T."/>
            <person name="Sugiyama A."/>
            <person name="Takemoto M."/>
            <person name="Kawakami B."/>
            <person name="Yamazaki M."/>
            <person name="Watanabe K."/>
            <person name="Kumagai A."/>
            <person name="Itakura S."/>
            <person name="Fukuzumi Y."/>
            <person name="Fujimori Y."/>
            <person name="Komiyama M."/>
            <person name="Tashiro H."/>
            <person name="Tanigami A."/>
            <person name="Fujiwara T."/>
            <person name="Ono T."/>
            <person name="Yamada K."/>
            <person name="Fujii Y."/>
            <person name="Ozaki K."/>
            <person name="Hirao M."/>
            <person name="Ohmori Y."/>
            <person name="Kawabata A."/>
            <person name="Hikiji T."/>
            <person name="Kobatake N."/>
            <person name="Inagaki H."/>
            <person name="Ikema Y."/>
            <person name="Okamoto S."/>
            <person name="Okitani R."/>
            <person name="Kawakami T."/>
            <person name="Noguchi S."/>
            <person name="Itoh T."/>
            <person name="Shigeta K."/>
            <person name="Senba T."/>
            <person name="Matsumura K."/>
            <person name="Nakajima Y."/>
            <person name="Mizuno T."/>
            <person name="Morinaga M."/>
            <person name="Sasaki M."/>
            <person name="Togashi T."/>
            <person name="Oyama M."/>
            <person name="Hata H."/>
            <person name="Watanabe M."/>
            <person name="Komatsu T."/>
            <person name="Mizushima-Sugano J."/>
            <person name="Satoh T."/>
            <person name="Shirai Y."/>
            <person name="Takahashi Y."/>
            <person name="Nakagawa K."/>
            <person name="Okumura K."/>
            <person name="Nagase T."/>
            <person name="Nomura N."/>
            <person name="Kikuchi H."/>
            <person name="Masuho Y."/>
            <person name="Yamashita R."/>
            <person name="Nakai K."/>
            <person name="Yada T."/>
            <person name="Nakamura Y."/>
            <person name="Ohara O."/>
            <person name="Isogai T."/>
            <person name="Sugano S."/>
        </authorList>
    </citation>
    <scope>NUCLEOTIDE SEQUENCE [LARGE SCALE MRNA]</scope>
    <source>
        <tissue>Placenta</tissue>
    </source>
</reference>
<reference key="2">
    <citation type="journal article" date="2003" name="Nature">
        <title>The male-specific region of the human Y chromosome is a mosaic of discrete sequence classes.</title>
        <authorList>
            <person name="Skaletsky H."/>
            <person name="Kuroda-Kawaguchi T."/>
            <person name="Minx P.J."/>
            <person name="Cordum H.S."/>
            <person name="Hillier L.W."/>
            <person name="Brown L.G."/>
            <person name="Repping S."/>
            <person name="Pyntikova T."/>
            <person name="Ali J."/>
            <person name="Bieri T."/>
            <person name="Chinwalla A."/>
            <person name="Delehaunty A."/>
            <person name="Delehaunty K."/>
            <person name="Du H."/>
            <person name="Fewell G."/>
            <person name="Fulton L."/>
            <person name="Fulton R."/>
            <person name="Graves T.A."/>
            <person name="Hou S.-F."/>
            <person name="Latrielle P."/>
            <person name="Leonard S."/>
            <person name="Mardis E."/>
            <person name="Maupin R."/>
            <person name="McPherson J."/>
            <person name="Miner T."/>
            <person name="Nash W."/>
            <person name="Nguyen C."/>
            <person name="Ozersky P."/>
            <person name="Pepin K."/>
            <person name="Rock S."/>
            <person name="Rohlfing T."/>
            <person name="Scott K."/>
            <person name="Schultz B."/>
            <person name="Strong C."/>
            <person name="Tin-Wollam A."/>
            <person name="Yang S.-P."/>
            <person name="Waterston R.H."/>
            <person name="Wilson R.K."/>
            <person name="Rozen S."/>
            <person name="Page D.C."/>
        </authorList>
    </citation>
    <scope>NUCLEOTIDE SEQUENCE [LARGE SCALE GENOMIC DNA]</scope>
</reference>
<reference key="3">
    <citation type="journal article" date="2005" name="Nature">
        <title>The DNA sequence of the human X chromosome.</title>
        <authorList>
            <person name="Ross M.T."/>
            <person name="Grafham D.V."/>
            <person name="Coffey A.J."/>
            <person name="Scherer S."/>
            <person name="McLay K."/>
            <person name="Muzny D."/>
            <person name="Platzer M."/>
            <person name="Howell G.R."/>
            <person name="Burrows C."/>
            <person name="Bird C.P."/>
            <person name="Frankish A."/>
            <person name="Lovell F.L."/>
            <person name="Howe K.L."/>
            <person name="Ashurst J.L."/>
            <person name="Fulton R.S."/>
            <person name="Sudbrak R."/>
            <person name="Wen G."/>
            <person name="Jones M.C."/>
            <person name="Hurles M.E."/>
            <person name="Andrews T.D."/>
            <person name="Scott C.E."/>
            <person name="Searle S."/>
            <person name="Ramser J."/>
            <person name="Whittaker A."/>
            <person name="Deadman R."/>
            <person name="Carter N.P."/>
            <person name="Hunt S.E."/>
            <person name="Chen R."/>
            <person name="Cree A."/>
            <person name="Gunaratne P."/>
            <person name="Havlak P."/>
            <person name="Hodgson A."/>
            <person name="Metzker M.L."/>
            <person name="Richards S."/>
            <person name="Scott G."/>
            <person name="Steffen D."/>
            <person name="Sodergren E."/>
            <person name="Wheeler D.A."/>
            <person name="Worley K.C."/>
            <person name="Ainscough R."/>
            <person name="Ambrose K.D."/>
            <person name="Ansari-Lari M.A."/>
            <person name="Aradhya S."/>
            <person name="Ashwell R.I."/>
            <person name="Babbage A.K."/>
            <person name="Bagguley C.L."/>
            <person name="Ballabio A."/>
            <person name="Banerjee R."/>
            <person name="Barker G.E."/>
            <person name="Barlow K.F."/>
            <person name="Barrett I.P."/>
            <person name="Bates K.N."/>
            <person name="Beare D.M."/>
            <person name="Beasley H."/>
            <person name="Beasley O."/>
            <person name="Beck A."/>
            <person name="Bethel G."/>
            <person name="Blechschmidt K."/>
            <person name="Brady N."/>
            <person name="Bray-Allen S."/>
            <person name="Bridgeman A.M."/>
            <person name="Brown A.J."/>
            <person name="Brown M.J."/>
            <person name="Bonnin D."/>
            <person name="Bruford E.A."/>
            <person name="Buhay C."/>
            <person name="Burch P."/>
            <person name="Burford D."/>
            <person name="Burgess J."/>
            <person name="Burrill W."/>
            <person name="Burton J."/>
            <person name="Bye J.M."/>
            <person name="Carder C."/>
            <person name="Carrel L."/>
            <person name="Chako J."/>
            <person name="Chapman J.C."/>
            <person name="Chavez D."/>
            <person name="Chen E."/>
            <person name="Chen G."/>
            <person name="Chen Y."/>
            <person name="Chen Z."/>
            <person name="Chinault C."/>
            <person name="Ciccodicola A."/>
            <person name="Clark S.Y."/>
            <person name="Clarke G."/>
            <person name="Clee C.M."/>
            <person name="Clegg S."/>
            <person name="Clerc-Blankenburg K."/>
            <person name="Clifford K."/>
            <person name="Cobley V."/>
            <person name="Cole C.G."/>
            <person name="Conquer J.S."/>
            <person name="Corby N."/>
            <person name="Connor R.E."/>
            <person name="David R."/>
            <person name="Davies J."/>
            <person name="Davis C."/>
            <person name="Davis J."/>
            <person name="Delgado O."/>
            <person name="Deshazo D."/>
            <person name="Dhami P."/>
            <person name="Ding Y."/>
            <person name="Dinh H."/>
            <person name="Dodsworth S."/>
            <person name="Draper H."/>
            <person name="Dugan-Rocha S."/>
            <person name="Dunham A."/>
            <person name="Dunn M."/>
            <person name="Durbin K.J."/>
            <person name="Dutta I."/>
            <person name="Eades T."/>
            <person name="Ellwood M."/>
            <person name="Emery-Cohen A."/>
            <person name="Errington H."/>
            <person name="Evans K.L."/>
            <person name="Faulkner L."/>
            <person name="Francis F."/>
            <person name="Frankland J."/>
            <person name="Fraser A.E."/>
            <person name="Galgoczy P."/>
            <person name="Gilbert J."/>
            <person name="Gill R."/>
            <person name="Gloeckner G."/>
            <person name="Gregory S.G."/>
            <person name="Gribble S."/>
            <person name="Griffiths C."/>
            <person name="Grocock R."/>
            <person name="Gu Y."/>
            <person name="Gwilliam R."/>
            <person name="Hamilton C."/>
            <person name="Hart E.A."/>
            <person name="Hawes A."/>
            <person name="Heath P.D."/>
            <person name="Heitmann K."/>
            <person name="Hennig S."/>
            <person name="Hernandez J."/>
            <person name="Hinzmann B."/>
            <person name="Ho S."/>
            <person name="Hoffs M."/>
            <person name="Howden P.J."/>
            <person name="Huckle E.J."/>
            <person name="Hume J."/>
            <person name="Hunt P.J."/>
            <person name="Hunt A.R."/>
            <person name="Isherwood J."/>
            <person name="Jacob L."/>
            <person name="Johnson D."/>
            <person name="Jones S."/>
            <person name="de Jong P.J."/>
            <person name="Joseph S.S."/>
            <person name="Keenan S."/>
            <person name="Kelly S."/>
            <person name="Kershaw J.K."/>
            <person name="Khan Z."/>
            <person name="Kioschis P."/>
            <person name="Klages S."/>
            <person name="Knights A.J."/>
            <person name="Kosiura A."/>
            <person name="Kovar-Smith C."/>
            <person name="Laird G.K."/>
            <person name="Langford C."/>
            <person name="Lawlor S."/>
            <person name="Leversha M."/>
            <person name="Lewis L."/>
            <person name="Liu W."/>
            <person name="Lloyd C."/>
            <person name="Lloyd D.M."/>
            <person name="Loulseged H."/>
            <person name="Loveland J.E."/>
            <person name="Lovell J.D."/>
            <person name="Lozado R."/>
            <person name="Lu J."/>
            <person name="Lyne R."/>
            <person name="Ma J."/>
            <person name="Maheshwari M."/>
            <person name="Matthews L.H."/>
            <person name="McDowall J."/>
            <person name="McLaren S."/>
            <person name="McMurray A."/>
            <person name="Meidl P."/>
            <person name="Meitinger T."/>
            <person name="Milne S."/>
            <person name="Miner G."/>
            <person name="Mistry S.L."/>
            <person name="Morgan M."/>
            <person name="Morris S."/>
            <person name="Mueller I."/>
            <person name="Mullikin J.C."/>
            <person name="Nguyen N."/>
            <person name="Nordsiek G."/>
            <person name="Nyakatura G."/>
            <person name="O'dell C.N."/>
            <person name="Okwuonu G."/>
            <person name="Palmer S."/>
            <person name="Pandian R."/>
            <person name="Parker D."/>
            <person name="Parrish J."/>
            <person name="Pasternak S."/>
            <person name="Patel D."/>
            <person name="Pearce A.V."/>
            <person name="Pearson D.M."/>
            <person name="Pelan S.E."/>
            <person name="Perez L."/>
            <person name="Porter K.M."/>
            <person name="Ramsey Y."/>
            <person name="Reichwald K."/>
            <person name="Rhodes S."/>
            <person name="Ridler K.A."/>
            <person name="Schlessinger D."/>
            <person name="Schueler M.G."/>
            <person name="Sehra H.K."/>
            <person name="Shaw-Smith C."/>
            <person name="Shen H."/>
            <person name="Sheridan E.M."/>
            <person name="Shownkeen R."/>
            <person name="Skuce C.D."/>
            <person name="Smith M.L."/>
            <person name="Sotheran E.C."/>
            <person name="Steingruber H.E."/>
            <person name="Steward C.A."/>
            <person name="Storey R."/>
            <person name="Swann R.M."/>
            <person name="Swarbreck D."/>
            <person name="Tabor P.E."/>
            <person name="Taudien S."/>
            <person name="Taylor T."/>
            <person name="Teague B."/>
            <person name="Thomas K."/>
            <person name="Thorpe A."/>
            <person name="Timms K."/>
            <person name="Tracey A."/>
            <person name="Trevanion S."/>
            <person name="Tromans A.C."/>
            <person name="d'Urso M."/>
            <person name="Verduzco D."/>
            <person name="Villasana D."/>
            <person name="Waldron L."/>
            <person name="Wall M."/>
            <person name="Wang Q."/>
            <person name="Warren J."/>
            <person name="Warry G.L."/>
            <person name="Wei X."/>
            <person name="West A."/>
            <person name="Whitehead S.L."/>
            <person name="Whiteley M.N."/>
            <person name="Wilkinson J.E."/>
            <person name="Willey D.L."/>
            <person name="Williams G."/>
            <person name="Williams L."/>
            <person name="Williamson A."/>
            <person name="Williamson H."/>
            <person name="Wilming L."/>
            <person name="Woodmansey R.L."/>
            <person name="Wray P.W."/>
            <person name="Yen J."/>
            <person name="Zhang J."/>
            <person name="Zhou J."/>
            <person name="Zoghbi H."/>
            <person name="Zorilla S."/>
            <person name="Buck D."/>
            <person name="Reinhardt R."/>
            <person name="Poustka A."/>
            <person name="Rosenthal A."/>
            <person name="Lehrach H."/>
            <person name="Meindl A."/>
            <person name="Minx P.J."/>
            <person name="Hillier L.W."/>
            <person name="Willard H.F."/>
            <person name="Wilson R.K."/>
            <person name="Waterston R.H."/>
            <person name="Rice C.M."/>
            <person name="Vaudin M."/>
            <person name="Coulson A."/>
            <person name="Nelson D.L."/>
            <person name="Weinstock G."/>
            <person name="Sulston J.E."/>
            <person name="Durbin R.M."/>
            <person name="Hubbard T."/>
            <person name="Gibbs R.A."/>
            <person name="Beck S."/>
            <person name="Rogers J."/>
            <person name="Bentley D.R."/>
        </authorList>
    </citation>
    <scope>NUCLEOTIDE SEQUENCE [LARGE SCALE GENOMIC DNA]</scope>
</reference>
<reference key="4">
    <citation type="submission" date="2005-09" db="EMBL/GenBank/DDBJ databases">
        <authorList>
            <person name="Mural R.J."/>
            <person name="Istrail S."/>
            <person name="Sutton G.G."/>
            <person name="Florea L."/>
            <person name="Halpern A.L."/>
            <person name="Mobarry C.M."/>
            <person name="Lippert R."/>
            <person name="Walenz B."/>
            <person name="Shatkay H."/>
            <person name="Dew I."/>
            <person name="Miller J.R."/>
            <person name="Flanigan M.J."/>
            <person name="Edwards N.J."/>
            <person name="Bolanos R."/>
            <person name="Fasulo D."/>
            <person name="Halldorsson B.V."/>
            <person name="Hannenhalli S."/>
            <person name="Turner R."/>
            <person name="Yooseph S."/>
            <person name="Lu F."/>
            <person name="Nusskern D.R."/>
            <person name="Shue B.C."/>
            <person name="Zheng X.H."/>
            <person name="Zhong F."/>
            <person name="Delcher A.L."/>
            <person name="Huson D.H."/>
            <person name="Kravitz S.A."/>
            <person name="Mouchard L."/>
            <person name="Reinert K."/>
            <person name="Remington K.A."/>
            <person name="Clark A.G."/>
            <person name="Waterman M.S."/>
            <person name="Eichler E.E."/>
            <person name="Adams M.D."/>
            <person name="Hunkapiller M.W."/>
            <person name="Myers E.W."/>
            <person name="Venter J.C."/>
        </authorList>
    </citation>
    <scope>NUCLEOTIDE SEQUENCE [LARGE SCALE GENOMIC DNA]</scope>
</reference>
<reference key="5">
    <citation type="journal article" date="2004" name="Genome Res.">
        <title>The status, quality, and expansion of the NIH full-length cDNA project: the Mammalian Gene Collection (MGC).</title>
        <authorList>
            <consortium name="The MGC Project Team"/>
        </authorList>
    </citation>
    <scope>NUCLEOTIDE SEQUENCE [LARGE SCALE MRNA]</scope>
    <source>
        <tissue>Skin</tissue>
    </source>
</reference>
<reference key="6">
    <citation type="journal article" date="2012" name="Biochem. Biophys. Res. Commun.">
        <title>Cloning, tissue distribution and sub-cellular localisation of phospholipase C X-domain containing protein (PLCXD) isoforms.</title>
        <authorList>
            <person name="Gellatly S.A."/>
            <person name="Kalujnaia S."/>
            <person name="Cramb G."/>
        </authorList>
    </citation>
    <scope>SUBCELLULAR LOCATION</scope>
    <scope>TISSUE SPECIFICITY</scope>
</reference>
<sequence>MGGQVSASNSFSRLHCRNANEDWMSALCPRLWDVPLHHLSIPGSHDTMTYCLNKKSPISHEESRLLQLLNKALPCITRPVVLKWSVTQALDVTEQLDAGVRYLDLRIAHMLEGSEKNLHFVHMVYTTALVEDTLTEISEWLERHPREVVILACRNFEGLSEDLHEYLVACIKNIFGDMLCPRGEVPTLRQLWSRGQQVIVSYEDESSLRRHHELWPGVPYWWGNRVKTEALIRYLETMKSCGRPGGLFVAGINLTENLQYVLAHPSESLEKMTLPNLPRLSAWVREQCPGPGSRCTNIIAGDFIGADGFVSDVIALNQKLLWC</sequence>
<evidence type="ECO:0000255" key="1">
    <source>
        <dbReference type="PROSITE-ProRule" id="PRU00270"/>
    </source>
</evidence>
<evidence type="ECO:0000269" key="2">
    <source>
    </source>
</evidence>
<keyword id="KW-0963">Cytoplasm</keyword>
<keyword id="KW-1267">Proteomics identification</keyword>
<keyword id="KW-1185">Reference proteome</keyword>
<gene>
    <name type="primary">PLCXD1</name>
</gene>
<protein>
    <recommendedName>
        <fullName>PI-PLC X domain-containing protein 1</fullName>
    </recommendedName>
</protein>
<proteinExistence type="evidence at protein level"/>
<dbReference type="EMBL" id="AK002185">
    <property type="protein sequence ID" value="BAA92127.1"/>
    <property type="molecule type" value="mRNA"/>
</dbReference>
<dbReference type="EMBL" id="BX537334">
    <property type="status" value="NOT_ANNOTATED_CDS"/>
    <property type="molecule type" value="Genomic_DNA"/>
</dbReference>
<dbReference type="EMBL" id="CH471225">
    <property type="protein sequence ID" value="EAW66822.1"/>
    <property type="molecule type" value="Genomic_DNA"/>
</dbReference>
<dbReference type="EMBL" id="BC005028">
    <property type="protein sequence ID" value="AAH05028.1"/>
    <property type="molecule type" value="mRNA"/>
</dbReference>
<dbReference type="CCDS" id="CCDS14103.1"/>
<dbReference type="RefSeq" id="NP_001357299.1">
    <property type="nucleotide sequence ID" value="NM_001370370.1"/>
</dbReference>
<dbReference type="RefSeq" id="NP_001357300.1">
    <property type="nucleotide sequence ID" value="NM_001370371.1"/>
</dbReference>
<dbReference type="RefSeq" id="NP_001357302.1">
    <property type="nucleotide sequence ID" value="NM_001370373.1"/>
</dbReference>
<dbReference type="RefSeq" id="NP_060860.1">
    <property type="nucleotide sequence ID" value="NM_018390.4"/>
</dbReference>
<dbReference type="RefSeq" id="XP_006724507.1">
    <property type="nucleotide sequence ID" value="XM_006724444.2"/>
</dbReference>
<dbReference type="RefSeq" id="XP_006724508.1">
    <property type="nucleotide sequence ID" value="XM_006724445.2"/>
</dbReference>
<dbReference type="RefSeq" id="XP_006724509.1">
    <property type="nucleotide sequence ID" value="XM_006724446.2"/>
</dbReference>
<dbReference type="RefSeq" id="XP_006724928.1">
    <property type="nucleotide sequence ID" value="XM_006724865.2"/>
</dbReference>
<dbReference type="RefSeq" id="XP_006724929.1">
    <property type="nucleotide sequence ID" value="XM_006724866.2"/>
</dbReference>
<dbReference type="RefSeq" id="XP_006724930.1">
    <property type="nucleotide sequence ID" value="XM_006724867.2"/>
</dbReference>
<dbReference type="RefSeq" id="XP_011543935.1">
    <property type="nucleotide sequence ID" value="XM_011545633.4"/>
</dbReference>
<dbReference type="RefSeq" id="XP_011544482.1">
    <property type="nucleotide sequence ID" value="XM_011546180.2"/>
</dbReference>
<dbReference type="RefSeq" id="XP_024308163.1">
    <property type="nucleotide sequence ID" value="XM_024452395.2"/>
</dbReference>
<dbReference type="RefSeq" id="XP_024308259.1">
    <property type="nucleotide sequence ID" value="XM_024452491.2"/>
</dbReference>
<dbReference type="RefSeq" id="XP_047298200.1">
    <property type="nucleotide sequence ID" value="XM_047442244.1"/>
</dbReference>
<dbReference type="RefSeq" id="XP_047298201.1">
    <property type="nucleotide sequence ID" value="XM_047442245.1"/>
</dbReference>
<dbReference type="RefSeq" id="XP_047298696.1">
    <property type="nucleotide sequence ID" value="XM_047442740.1"/>
</dbReference>
<dbReference type="RefSeq" id="XP_047298697.1">
    <property type="nucleotide sequence ID" value="XM_047442741.1"/>
</dbReference>
<dbReference type="RefSeq" id="XP_054183335.1">
    <property type="nucleotide sequence ID" value="XM_054327360.1"/>
</dbReference>
<dbReference type="RefSeq" id="XP_054183336.1">
    <property type="nucleotide sequence ID" value="XM_054327361.1"/>
</dbReference>
<dbReference type="RefSeq" id="XP_054184287.1">
    <property type="nucleotide sequence ID" value="XM_054328312.1"/>
</dbReference>
<dbReference type="RefSeq" id="XP_054184288.1">
    <property type="nucleotide sequence ID" value="XM_054328313.1"/>
</dbReference>
<dbReference type="RefSeq" id="XP_054184289.1">
    <property type="nucleotide sequence ID" value="XM_054328314.1"/>
</dbReference>
<dbReference type="RefSeq" id="XP_054184290.1">
    <property type="nucleotide sequence ID" value="XM_054328315.1"/>
</dbReference>
<dbReference type="RefSeq" id="XP_054184291.1">
    <property type="nucleotide sequence ID" value="XM_054328316.1"/>
</dbReference>
<dbReference type="SMR" id="Q9NUJ7"/>
<dbReference type="BioGRID" id="120625">
    <property type="interactions" value="10"/>
</dbReference>
<dbReference type="FunCoup" id="Q9NUJ7">
    <property type="interactions" value="38"/>
</dbReference>
<dbReference type="IntAct" id="Q9NUJ7">
    <property type="interactions" value="2"/>
</dbReference>
<dbReference type="STRING" id="9606.ENSP00000371073"/>
<dbReference type="iPTMnet" id="Q9NUJ7"/>
<dbReference type="PhosphoSitePlus" id="Q9NUJ7"/>
<dbReference type="SwissPalm" id="Q9NUJ7"/>
<dbReference type="BioMuta" id="PLCXD1"/>
<dbReference type="DMDM" id="74752980"/>
<dbReference type="jPOST" id="Q9NUJ7"/>
<dbReference type="MassIVE" id="Q9NUJ7"/>
<dbReference type="PaxDb" id="9606-ENSP00000371073"/>
<dbReference type="PeptideAtlas" id="Q9NUJ7"/>
<dbReference type="ProteomicsDB" id="82678"/>
<dbReference type="Pumba" id="Q9NUJ7"/>
<dbReference type="Antibodypedia" id="557">
    <property type="antibodies" value="184 antibodies from 23 providers"/>
</dbReference>
<dbReference type="DNASU" id="55344"/>
<dbReference type="Ensembl" id="ENST00000381657.8">
    <property type="protein sequence ID" value="ENSP00000371073.2"/>
    <property type="gene ID" value="ENSG00000182378.15"/>
</dbReference>
<dbReference type="Ensembl" id="ENST00000399012.6">
    <property type="protein sequence ID" value="ENSP00000381976.1"/>
    <property type="gene ID" value="ENSG00000182378.15"/>
</dbReference>
<dbReference type="Ensembl" id="ENST00000711179.1">
    <property type="protein sequence ID" value="ENSP00000518661.1"/>
    <property type="gene ID" value="ENSG00000292344.1"/>
</dbReference>
<dbReference type="Ensembl" id="ENST00000711184.1">
    <property type="protein sequence ID" value="ENSP00000518594.1"/>
    <property type="gene ID" value="ENSG00000292344.1"/>
</dbReference>
<dbReference type="GeneID" id="55344"/>
<dbReference type="KEGG" id="hsa:55344"/>
<dbReference type="MANE-Select" id="ENST00000381657.8">
    <property type="protein sequence ID" value="ENSP00000371073.2"/>
    <property type="RefSeq nucleotide sequence ID" value="NM_018390.4"/>
    <property type="RefSeq protein sequence ID" value="NP_060860.1"/>
</dbReference>
<dbReference type="UCSC" id="uc004cpc.4">
    <property type="organism name" value="human"/>
</dbReference>
<dbReference type="AGR" id="HGNC:23148"/>
<dbReference type="CTD" id="55344"/>
<dbReference type="GeneCards" id="PLCXD1"/>
<dbReference type="HGNC" id="HGNC:23148">
    <property type="gene designation" value="PLCXD1"/>
</dbReference>
<dbReference type="HPA" id="ENSG00000182378">
    <property type="expression patterns" value="Low tissue specificity"/>
</dbReference>
<dbReference type="MIM" id="300974">
    <property type="type" value="gene"/>
</dbReference>
<dbReference type="MIM" id="400046">
    <property type="type" value="gene"/>
</dbReference>
<dbReference type="neXtProt" id="NX_Q9NUJ7"/>
<dbReference type="OpenTargets" id="ENSG00000182378"/>
<dbReference type="PharmGKB" id="PA134878642"/>
<dbReference type="VEuPathDB" id="HostDB:ENSG00000182378"/>
<dbReference type="eggNOG" id="KOG4306">
    <property type="taxonomic scope" value="Eukaryota"/>
</dbReference>
<dbReference type="GeneTree" id="ENSGT00940000161625"/>
<dbReference type="HOGENOM" id="CLU_051926_1_0_1"/>
<dbReference type="InParanoid" id="Q9NUJ7"/>
<dbReference type="OMA" id="GDLWPHI"/>
<dbReference type="OrthoDB" id="1046782at2759"/>
<dbReference type="PAN-GO" id="Q9NUJ7">
    <property type="GO annotations" value="1 GO annotation based on evolutionary models"/>
</dbReference>
<dbReference type="PhylomeDB" id="Q9NUJ7"/>
<dbReference type="TreeFam" id="TF314457"/>
<dbReference type="PathwayCommons" id="Q9NUJ7"/>
<dbReference type="SignaLink" id="Q9NUJ7"/>
<dbReference type="BioGRID-ORCS" id="55344">
    <property type="hits" value="8 hits in 612 CRISPR screens"/>
</dbReference>
<dbReference type="ChiTaRS" id="PLCXD1">
    <property type="organism name" value="human"/>
</dbReference>
<dbReference type="GeneWiki" id="PLCXD1"/>
<dbReference type="GenomeRNAi" id="55344"/>
<dbReference type="Pharos" id="Q9NUJ7">
    <property type="development level" value="Tdark"/>
</dbReference>
<dbReference type="PRO" id="PR:Q9NUJ7"/>
<dbReference type="Proteomes" id="UP000005640">
    <property type="component" value="Chromosome X"/>
</dbReference>
<dbReference type="Proteomes" id="UP000005640">
    <property type="component" value="Chromosome Y"/>
</dbReference>
<dbReference type="RNAct" id="Q9NUJ7">
    <property type="molecule type" value="protein"/>
</dbReference>
<dbReference type="Bgee" id="ENSG00000182378">
    <property type="expression patterns" value="Expressed in cervix squamous epithelium and 179 other cell types or tissues"/>
</dbReference>
<dbReference type="ExpressionAtlas" id="Q9NUJ7">
    <property type="expression patterns" value="baseline and differential"/>
</dbReference>
<dbReference type="GO" id="GO:0005737">
    <property type="term" value="C:cytoplasm"/>
    <property type="evidence" value="ECO:0007669"/>
    <property type="project" value="UniProtKB-SubCell"/>
</dbReference>
<dbReference type="GO" id="GO:0008081">
    <property type="term" value="F:phosphoric diester hydrolase activity"/>
    <property type="evidence" value="ECO:0000318"/>
    <property type="project" value="GO_Central"/>
</dbReference>
<dbReference type="GO" id="GO:0006629">
    <property type="term" value="P:lipid metabolic process"/>
    <property type="evidence" value="ECO:0007669"/>
    <property type="project" value="InterPro"/>
</dbReference>
<dbReference type="CDD" id="cd08616">
    <property type="entry name" value="PI-PLCXD1c"/>
    <property type="match status" value="1"/>
</dbReference>
<dbReference type="Gene3D" id="3.20.20.190">
    <property type="entry name" value="Phosphatidylinositol (PI) phosphodiesterase"/>
    <property type="match status" value="1"/>
</dbReference>
<dbReference type="InterPro" id="IPR051057">
    <property type="entry name" value="PI-PLC_domain"/>
</dbReference>
<dbReference type="InterPro" id="IPR017946">
    <property type="entry name" value="PLC-like_Pdiesterase_TIM-brl"/>
</dbReference>
<dbReference type="InterPro" id="IPR042158">
    <property type="entry name" value="PLCXD1/2/3"/>
</dbReference>
<dbReference type="InterPro" id="IPR000909">
    <property type="entry name" value="PLipase_C_PInositol-sp_X_dom"/>
</dbReference>
<dbReference type="PANTHER" id="PTHR13593">
    <property type="match status" value="1"/>
</dbReference>
<dbReference type="PANTHER" id="PTHR13593:SF24">
    <property type="entry name" value="PI-PLC X DOMAIN-CONTAINING PROTEIN 1"/>
    <property type="match status" value="1"/>
</dbReference>
<dbReference type="Pfam" id="PF00388">
    <property type="entry name" value="PI-PLC-X"/>
    <property type="match status" value="1"/>
</dbReference>
<dbReference type="SMART" id="SM00148">
    <property type="entry name" value="PLCXc"/>
    <property type="match status" value="1"/>
</dbReference>
<dbReference type="SUPFAM" id="SSF51695">
    <property type="entry name" value="PLC-like phosphodiesterases"/>
    <property type="match status" value="1"/>
</dbReference>
<dbReference type="PROSITE" id="PS50007">
    <property type="entry name" value="PIPLC_X_DOMAIN"/>
    <property type="match status" value="1"/>
</dbReference>
<feature type="chain" id="PRO_0000304804" description="PI-PLC X domain-containing protein 1">
    <location>
        <begin position="1"/>
        <end position="323"/>
    </location>
</feature>
<feature type="domain" description="PI-PLC X-box" evidence="1">
    <location>
        <begin position="30"/>
        <end position="206"/>
    </location>
</feature>
<organism>
    <name type="scientific">Homo sapiens</name>
    <name type="common">Human</name>
    <dbReference type="NCBI Taxonomy" id="9606"/>
    <lineage>
        <taxon>Eukaryota</taxon>
        <taxon>Metazoa</taxon>
        <taxon>Chordata</taxon>
        <taxon>Craniata</taxon>
        <taxon>Vertebrata</taxon>
        <taxon>Euteleostomi</taxon>
        <taxon>Mammalia</taxon>
        <taxon>Eutheria</taxon>
        <taxon>Euarchontoglires</taxon>
        <taxon>Primates</taxon>
        <taxon>Haplorrhini</taxon>
        <taxon>Catarrhini</taxon>
        <taxon>Hominidae</taxon>
        <taxon>Homo</taxon>
    </lineage>
</organism>
<comment type="subcellular location">
    <subcellularLocation>
        <location evidence="2">Cytoplasm</location>
    </subcellularLocation>
</comment>
<comment type="tissue specificity">
    <text evidence="2">Widely expressed.</text>
</comment>
<comment type="miscellaneous">
    <text>The gene coding for this protein is located in the pseudoautosomal region 1 (PAR1) of X and Y chromosomes.</text>
</comment>
<name>PLCX1_HUMAN</name>